<protein>
    <recommendedName>
        <fullName evidence="1">Pyridoxine/pyridoxamine 5'-phosphate oxidase</fullName>
        <ecNumber evidence="1">1.4.3.5</ecNumber>
    </recommendedName>
    <alternativeName>
        <fullName evidence="1">PNP/PMP oxidase</fullName>
        <shortName evidence="1">PNPOx</shortName>
    </alternativeName>
    <alternativeName>
        <fullName evidence="1">Pyridoxal 5'-phosphate synthase</fullName>
    </alternativeName>
</protein>
<sequence>MRRLGLSNIATRKREQPMIDISADPFQLFAAWMQDAEAAEPNDPNAMTLATATPDGRPSARIVLLKSWDEAGFVFYTNLESRKSLEIRANPDVSLLFHWKSLRRQIRIEGRCRAVSDDEADAYFDSRPRISRLGAWASDQSRPLGERAELERRLAEVTARYGDGPIPRPPHWSGWHVMPDSIEFWQDRDFRLHDRAVFTRTGDAWSATRLFP</sequence>
<reference key="1">
    <citation type="submission" date="2007-05" db="EMBL/GenBank/DDBJ databases">
        <title>Complete sequence of chromosome of Acidiphilium cryptum JF-5.</title>
        <authorList>
            <consortium name="US DOE Joint Genome Institute"/>
            <person name="Copeland A."/>
            <person name="Lucas S."/>
            <person name="Lapidus A."/>
            <person name="Barry K."/>
            <person name="Detter J.C."/>
            <person name="Glavina del Rio T."/>
            <person name="Hammon N."/>
            <person name="Israni S."/>
            <person name="Dalin E."/>
            <person name="Tice H."/>
            <person name="Pitluck S."/>
            <person name="Sims D."/>
            <person name="Brettin T."/>
            <person name="Bruce D."/>
            <person name="Han C."/>
            <person name="Schmutz J."/>
            <person name="Larimer F."/>
            <person name="Land M."/>
            <person name="Hauser L."/>
            <person name="Kyrpides N."/>
            <person name="Kim E."/>
            <person name="Magnuson T."/>
            <person name="Richardson P."/>
        </authorList>
    </citation>
    <scope>NUCLEOTIDE SEQUENCE [LARGE SCALE GENOMIC DNA]</scope>
    <source>
        <strain>JF-5</strain>
    </source>
</reference>
<accession>A5FWR6</accession>
<dbReference type="EC" id="1.4.3.5" evidence="1"/>
<dbReference type="EMBL" id="CP000697">
    <property type="protein sequence ID" value="ABQ30048.1"/>
    <property type="molecule type" value="Genomic_DNA"/>
</dbReference>
<dbReference type="SMR" id="A5FWR6"/>
<dbReference type="STRING" id="349163.Acry_0829"/>
<dbReference type="KEGG" id="acr:Acry_0829"/>
<dbReference type="eggNOG" id="COG0259">
    <property type="taxonomic scope" value="Bacteria"/>
</dbReference>
<dbReference type="HOGENOM" id="CLU_032263_2_3_5"/>
<dbReference type="UniPathway" id="UPA01068">
    <property type="reaction ID" value="UER00304"/>
</dbReference>
<dbReference type="UniPathway" id="UPA01068">
    <property type="reaction ID" value="UER00305"/>
</dbReference>
<dbReference type="Proteomes" id="UP000000245">
    <property type="component" value="Chromosome"/>
</dbReference>
<dbReference type="GO" id="GO:0010181">
    <property type="term" value="F:FMN binding"/>
    <property type="evidence" value="ECO:0007669"/>
    <property type="project" value="UniProtKB-UniRule"/>
</dbReference>
<dbReference type="GO" id="GO:0004733">
    <property type="term" value="F:pyridoxamine phosphate oxidase activity"/>
    <property type="evidence" value="ECO:0007669"/>
    <property type="project" value="UniProtKB-UniRule"/>
</dbReference>
<dbReference type="GO" id="GO:0008615">
    <property type="term" value="P:pyridoxine biosynthetic process"/>
    <property type="evidence" value="ECO:0007669"/>
    <property type="project" value="UniProtKB-KW"/>
</dbReference>
<dbReference type="Gene3D" id="2.30.110.10">
    <property type="entry name" value="Electron Transport, Fmn-binding Protein, Chain A"/>
    <property type="match status" value="1"/>
</dbReference>
<dbReference type="HAMAP" id="MF_01629">
    <property type="entry name" value="PdxH"/>
    <property type="match status" value="1"/>
</dbReference>
<dbReference type="InterPro" id="IPR000659">
    <property type="entry name" value="Pyridox_Oxase"/>
</dbReference>
<dbReference type="InterPro" id="IPR019740">
    <property type="entry name" value="Pyridox_Oxase_CS"/>
</dbReference>
<dbReference type="InterPro" id="IPR011576">
    <property type="entry name" value="Pyridox_Oxase_N"/>
</dbReference>
<dbReference type="InterPro" id="IPR019576">
    <property type="entry name" value="Pyridoxamine_oxidase_dimer_C"/>
</dbReference>
<dbReference type="InterPro" id="IPR012349">
    <property type="entry name" value="Split_barrel_FMN-bd"/>
</dbReference>
<dbReference type="NCBIfam" id="TIGR00558">
    <property type="entry name" value="pdxH"/>
    <property type="match status" value="1"/>
</dbReference>
<dbReference type="NCBIfam" id="NF004231">
    <property type="entry name" value="PRK05679.1"/>
    <property type="match status" value="1"/>
</dbReference>
<dbReference type="PANTHER" id="PTHR10851:SF0">
    <property type="entry name" value="PYRIDOXINE-5'-PHOSPHATE OXIDASE"/>
    <property type="match status" value="1"/>
</dbReference>
<dbReference type="PANTHER" id="PTHR10851">
    <property type="entry name" value="PYRIDOXINE-5-PHOSPHATE OXIDASE"/>
    <property type="match status" value="1"/>
</dbReference>
<dbReference type="Pfam" id="PF10590">
    <property type="entry name" value="PNP_phzG_C"/>
    <property type="match status" value="1"/>
</dbReference>
<dbReference type="Pfam" id="PF01243">
    <property type="entry name" value="PNPOx_N"/>
    <property type="match status" value="1"/>
</dbReference>
<dbReference type="PIRSF" id="PIRSF000190">
    <property type="entry name" value="Pyd_amn-ph_oxd"/>
    <property type="match status" value="1"/>
</dbReference>
<dbReference type="SUPFAM" id="SSF50475">
    <property type="entry name" value="FMN-binding split barrel"/>
    <property type="match status" value="1"/>
</dbReference>
<dbReference type="PROSITE" id="PS01064">
    <property type="entry name" value="PYRIDOX_OXIDASE"/>
    <property type="match status" value="1"/>
</dbReference>
<organism>
    <name type="scientific">Acidiphilium cryptum (strain JF-5)</name>
    <dbReference type="NCBI Taxonomy" id="349163"/>
    <lineage>
        <taxon>Bacteria</taxon>
        <taxon>Pseudomonadati</taxon>
        <taxon>Pseudomonadota</taxon>
        <taxon>Alphaproteobacteria</taxon>
        <taxon>Acetobacterales</taxon>
        <taxon>Acidocellaceae</taxon>
        <taxon>Acidiphilium</taxon>
    </lineage>
</organism>
<keyword id="KW-0285">Flavoprotein</keyword>
<keyword id="KW-0288">FMN</keyword>
<keyword id="KW-0560">Oxidoreductase</keyword>
<keyword id="KW-0664">Pyridoxine biosynthesis</keyword>
<keyword id="KW-1185">Reference proteome</keyword>
<proteinExistence type="inferred from homology"/>
<name>PDXH_ACICJ</name>
<gene>
    <name evidence="1" type="primary">pdxH</name>
    <name type="ordered locus">Acry_0829</name>
</gene>
<evidence type="ECO:0000255" key="1">
    <source>
        <dbReference type="HAMAP-Rule" id="MF_01629"/>
    </source>
</evidence>
<comment type="function">
    <text evidence="1">Catalyzes the oxidation of either pyridoxine 5'-phosphate (PNP) or pyridoxamine 5'-phosphate (PMP) into pyridoxal 5'-phosphate (PLP).</text>
</comment>
<comment type="catalytic activity">
    <reaction evidence="1">
        <text>pyridoxamine 5'-phosphate + O2 + H2O = pyridoxal 5'-phosphate + H2O2 + NH4(+)</text>
        <dbReference type="Rhea" id="RHEA:15817"/>
        <dbReference type="ChEBI" id="CHEBI:15377"/>
        <dbReference type="ChEBI" id="CHEBI:15379"/>
        <dbReference type="ChEBI" id="CHEBI:16240"/>
        <dbReference type="ChEBI" id="CHEBI:28938"/>
        <dbReference type="ChEBI" id="CHEBI:58451"/>
        <dbReference type="ChEBI" id="CHEBI:597326"/>
        <dbReference type="EC" id="1.4.3.5"/>
    </reaction>
</comment>
<comment type="catalytic activity">
    <reaction evidence="1">
        <text>pyridoxine 5'-phosphate + O2 = pyridoxal 5'-phosphate + H2O2</text>
        <dbReference type="Rhea" id="RHEA:15149"/>
        <dbReference type="ChEBI" id="CHEBI:15379"/>
        <dbReference type="ChEBI" id="CHEBI:16240"/>
        <dbReference type="ChEBI" id="CHEBI:58589"/>
        <dbReference type="ChEBI" id="CHEBI:597326"/>
        <dbReference type="EC" id="1.4.3.5"/>
    </reaction>
</comment>
<comment type="cofactor">
    <cofactor evidence="1">
        <name>FMN</name>
        <dbReference type="ChEBI" id="CHEBI:58210"/>
    </cofactor>
    <text evidence="1">Binds 1 FMN per subunit.</text>
</comment>
<comment type="pathway">
    <text evidence="1">Cofactor metabolism; pyridoxal 5'-phosphate salvage; pyridoxal 5'-phosphate from pyridoxamine 5'-phosphate: step 1/1.</text>
</comment>
<comment type="pathway">
    <text evidence="1">Cofactor metabolism; pyridoxal 5'-phosphate salvage; pyridoxal 5'-phosphate from pyridoxine 5'-phosphate: step 1/1.</text>
</comment>
<comment type="subunit">
    <text evidence="1">Homodimer.</text>
</comment>
<comment type="similarity">
    <text evidence="1">Belongs to the pyridoxamine 5'-phosphate oxidase family.</text>
</comment>
<feature type="chain" id="PRO_0000335776" description="Pyridoxine/pyridoxamine 5'-phosphate oxidase">
    <location>
        <begin position="1"/>
        <end position="212"/>
    </location>
</feature>
<feature type="binding site" evidence="1">
    <location>
        <begin position="61"/>
        <end position="66"/>
    </location>
    <ligand>
        <name>FMN</name>
        <dbReference type="ChEBI" id="CHEBI:58210"/>
    </ligand>
</feature>
<feature type="binding site" evidence="1">
    <location>
        <position position="66"/>
    </location>
    <ligand>
        <name>substrate</name>
    </ligand>
</feature>
<feature type="binding site" evidence="1">
    <location>
        <begin position="76"/>
        <end position="77"/>
    </location>
    <ligand>
        <name>FMN</name>
        <dbReference type="ChEBI" id="CHEBI:58210"/>
    </ligand>
</feature>
<feature type="binding site" evidence="1">
    <location>
        <position position="82"/>
    </location>
    <ligand>
        <name>FMN</name>
        <dbReference type="ChEBI" id="CHEBI:58210"/>
    </ligand>
</feature>
<feature type="binding site" evidence="1">
    <location>
        <position position="83"/>
    </location>
    <ligand>
        <name>FMN</name>
        <dbReference type="ChEBI" id="CHEBI:58210"/>
    </ligand>
</feature>
<feature type="binding site" evidence="1">
    <location>
        <position position="105"/>
    </location>
    <ligand>
        <name>FMN</name>
        <dbReference type="ChEBI" id="CHEBI:58210"/>
    </ligand>
</feature>
<feature type="binding site" evidence="1">
    <location>
        <position position="123"/>
    </location>
    <ligand>
        <name>substrate</name>
    </ligand>
</feature>
<feature type="binding site" evidence="1">
    <location>
        <position position="127"/>
    </location>
    <ligand>
        <name>substrate</name>
    </ligand>
</feature>
<feature type="binding site" evidence="1">
    <location>
        <position position="131"/>
    </location>
    <ligand>
        <name>substrate</name>
    </ligand>
</feature>
<feature type="binding site" evidence="1">
    <location>
        <begin position="140"/>
        <end position="141"/>
    </location>
    <ligand>
        <name>FMN</name>
        <dbReference type="ChEBI" id="CHEBI:58210"/>
    </ligand>
</feature>
<feature type="binding site" evidence="1">
    <location>
        <position position="185"/>
    </location>
    <ligand>
        <name>FMN</name>
        <dbReference type="ChEBI" id="CHEBI:58210"/>
    </ligand>
</feature>
<feature type="binding site" evidence="1">
    <location>
        <begin position="191"/>
        <end position="193"/>
    </location>
    <ligand>
        <name>substrate</name>
    </ligand>
</feature>
<feature type="binding site" evidence="1">
    <location>
        <position position="195"/>
    </location>
    <ligand>
        <name>FMN</name>
        <dbReference type="ChEBI" id="CHEBI:58210"/>
    </ligand>
</feature>